<gene>
    <name type="primary">EMP3</name>
    <name type="synonym">YMP</name>
</gene>
<feature type="chain" id="PRO_0000164660" description="Epithelial membrane protein 3">
    <location>
        <begin position="1"/>
        <end position="163"/>
    </location>
</feature>
<feature type="transmembrane region" description="Helical" evidence="1">
    <location>
        <begin position="4"/>
        <end position="24"/>
    </location>
</feature>
<feature type="transmembrane region" description="Helical" evidence="1">
    <location>
        <begin position="66"/>
        <end position="86"/>
    </location>
</feature>
<feature type="transmembrane region" description="Helical" evidence="1">
    <location>
        <begin position="100"/>
        <end position="120"/>
    </location>
</feature>
<feature type="transmembrane region" description="Helical" evidence="1">
    <location>
        <begin position="139"/>
        <end position="159"/>
    </location>
</feature>
<feature type="glycosylation site" description="N-linked (GlcNAc...) asparagine" evidence="1">
    <location>
        <position position="47"/>
    </location>
</feature>
<feature type="glycosylation site" description="N-linked (GlcNAc...) asparagine" evidence="1">
    <location>
        <position position="56"/>
    </location>
</feature>
<feature type="sequence variant" id="VAR_050609" description="In dbSNP:rs4893.">
    <original>I</original>
    <variation>V</variation>
    <location>
        <position position="125"/>
    </location>
</feature>
<feature type="sequence conflict" description="In Ref. 2; CAA64394." evidence="2" ref="2">
    <original>TG</original>
    <variation>HR</variation>
    <location>
        <begin position="100"/>
        <end position="101"/>
    </location>
</feature>
<proteinExistence type="evidence at protein level"/>
<evidence type="ECO:0000255" key="1"/>
<evidence type="ECO:0000305" key="2"/>
<protein>
    <recommendedName>
        <fullName>Epithelial membrane protein 3</fullName>
        <shortName>EMP-3</shortName>
    </recommendedName>
    <alternativeName>
        <fullName>Hematopoietic neural membrane protein 1</fullName>
        <shortName>HNMP-1</shortName>
    </alternativeName>
    <alternativeName>
        <fullName>Protein YMP</fullName>
    </alternativeName>
</protein>
<name>EMP3_HUMAN</name>
<dbReference type="EMBL" id="U52101">
    <property type="protein sequence ID" value="AAC50920.1"/>
    <property type="molecule type" value="mRNA"/>
</dbReference>
<dbReference type="EMBL" id="X94771">
    <property type="protein sequence ID" value="CAA64394.1"/>
    <property type="molecule type" value="mRNA"/>
</dbReference>
<dbReference type="EMBL" id="U87947">
    <property type="protein sequence ID" value="AAC51730.1"/>
    <property type="molecule type" value="mRNA"/>
</dbReference>
<dbReference type="EMBL" id="BT007124">
    <property type="protein sequence ID" value="AAP35788.1"/>
    <property type="molecule type" value="mRNA"/>
</dbReference>
<dbReference type="EMBL" id="CR541955">
    <property type="protein sequence ID" value="CAG46753.1"/>
    <property type="molecule type" value="mRNA"/>
</dbReference>
<dbReference type="EMBL" id="CH471177">
    <property type="protein sequence ID" value="EAW52333.1"/>
    <property type="molecule type" value="Genomic_DNA"/>
</dbReference>
<dbReference type="EMBL" id="BC009718">
    <property type="protein sequence ID" value="AAH09718.1"/>
    <property type="molecule type" value="mRNA"/>
</dbReference>
<dbReference type="CCDS" id="CCDS12715.1"/>
<dbReference type="PIR" id="JC5045">
    <property type="entry name" value="JC5045"/>
</dbReference>
<dbReference type="RefSeq" id="NP_001300834.1">
    <property type="nucleotide sequence ID" value="NM_001313905.1"/>
</dbReference>
<dbReference type="RefSeq" id="NP_001416.1">
    <property type="nucleotide sequence ID" value="NM_001425.3"/>
</dbReference>
<dbReference type="RefSeq" id="XP_011524907.1">
    <property type="nucleotide sequence ID" value="XM_011526605.4"/>
</dbReference>
<dbReference type="RefSeq" id="XP_054176149.1">
    <property type="nucleotide sequence ID" value="XM_054320174.1"/>
</dbReference>
<dbReference type="SMR" id="P54852"/>
<dbReference type="BioGRID" id="108329">
    <property type="interactions" value="74"/>
</dbReference>
<dbReference type="FunCoup" id="P54852">
    <property type="interactions" value="741"/>
</dbReference>
<dbReference type="IntAct" id="P54852">
    <property type="interactions" value="75"/>
</dbReference>
<dbReference type="MINT" id="P54852"/>
<dbReference type="STRING" id="9606.ENSP00000469194"/>
<dbReference type="GlyCosmos" id="P54852">
    <property type="glycosylation" value="2 sites, No reported glycans"/>
</dbReference>
<dbReference type="GlyGen" id="P54852">
    <property type="glycosylation" value="3 sites, 2 N-linked glycans (1 site)"/>
</dbReference>
<dbReference type="iPTMnet" id="P54852"/>
<dbReference type="PhosphoSitePlus" id="P54852"/>
<dbReference type="SwissPalm" id="P54852"/>
<dbReference type="BioMuta" id="EMP3"/>
<dbReference type="DMDM" id="1706644"/>
<dbReference type="jPOST" id="P54852"/>
<dbReference type="MassIVE" id="P54852"/>
<dbReference type="PaxDb" id="9606-ENSP00000270221"/>
<dbReference type="PeptideAtlas" id="P54852"/>
<dbReference type="ProteomicsDB" id="56741"/>
<dbReference type="Pumba" id="P54852"/>
<dbReference type="TopDownProteomics" id="P54852"/>
<dbReference type="Antibodypedia" id="31695">
    <property type="antibodies" value="228 antibodies from 25 providers"/>
</dbReference>
<dbReference type="DNASU" id="2014"/>
<dbReference type="Ensembl" id="ENST00000270221.11">
    <property type="protein sequence ID" value="ENSP00000270221.5"/>
    <property type="gene ID" value="ENSG00000142227.12"/>
</dbReference>
<dbReference type="Ensembl" id="ENST00000597279.5">
    <property type="protein sequence ID" value="ENSP00000469194.1"/>
    <property type="gene ID" value="ENSG00000142227.12"/>
</dbReference>
<dbReference type="Ensembl" id="ENST00000850572.1">
    <property type="protein sequence ID" value="ENSP00000520862.1"/>
    <property type="gene ID" value="ENSG00000142227.12"/>
</dbReference>
<dbReference type="GeneID" id="2014"/>
<dbReference type="KEGG" id="hsa:2014"/>
<dbReference type="MANE-Select" id="ENST00000270221.11">
    <property type="protein sequence ID" value="ENSP00000270221.5"/>
    <property type="RefSeq nucleotide sequence ID" value="NM_001425.3"/>
    <property type="RefSeq protein sequence ID" value="NP_001416.1"/>
</dbReference>
<dbReference type="UCSC" id="uc002piv.3">
    <property type="organism name" value="human"/>
</dbReference>
<dbReference type="AGR" id="HGNC:3335"/>
<dbReference type="CTD" id="2014"/>
<dbReference type="DisGeNET" id="2014"/>
<dbReference type="GeneCards" id="EMP3"/>
<dbReference type="HGNC" id="HGNC:3335">
    <property type="gene designation" value="EMP3"/>
</dbReference>
<dbReference type="HPA" id="ENSG00000142227">
    <property type="expression patterns" value="Low tissue specificity"/>
</dbReference>
<dbReference type="MIM" id="602335">
    <property type="type" value="gene"/>
</dbReference>
<dbReference type="neXtProt" id="NX_P54852"/>
<dbReference type="OpenTargets" id="ENSG00000142227"/>
<dbReference type="PharmGKB" id="PA27772"/>
<dbReference type="VEuPathDB" id="HostDB:ENSG00000142227"/>
<dbReference type="eggNOG" id="ENOG502RZP6">
    <property type="taxonomic scope" value="Eukaryota"/>
</dbReference>
<dbReference type="GeneTree" id="ENSGT00950000182696"/>
<dbReference type="HOGENOM" id="CLU_138632_1_0_1"/>
<dbReference type="InParanoid" id="P54852"/>
<dbReference type="OMA" id="CRFDNFT"/>
<dbReference type="OrthoDB" id="8714888at2759"/>
<dbReference type="PAN-GO" id="P54852">
    <property type="GO annotations" value="1 GO annotation based on evolutionary models"/>
</dbReference>
<dbReference type="PhylomeDB" id="P54852"/>
<dbReference type="TreeFam" id="TF330414"/>
<dbReference type="PathwayCommons" id="P54852"/>
<dbReference type="SignaLink" id="P54852"/>
<dbReference type="BioGRID-ORCS" id="2014">
    <property type="hits" value="16 hits in 1172 CRISPR screens"/>
</dbReference>
<dbReference type="ChiTaRS" id="EMP3">
    <property type="organism name" value="human"/>
</dbReference>
<dbReference type="GeneWiki" id="EMP3"/>
<dbReference type="GenomeRNAi" id="2014"/>
<dbReference type="Pharos" id="P54852">
    <property type="development level" value="Tbio"/>
</dbReference>
<dbReference type="PRO" id="PR:P54852"/>
<dbReference type="Proteomes" id="UP000005640">
    <property type="component" value="Chromosome 19"/>
</dbReference>
<dbReference type="RNAct" id="P54852">
    <property type="molecule type" value="protein"/>
</dbReference>
<dbReference type="Bgee" id="ENSG00000142227">
    <property type="expression patterns" value="Expressed in granulocyte and 182 other cell types or tissues"/>
</dbReference>
<dbReference type="ExpressionAtlas" id="P54852">
    <property type="expression patterns" value="baseline and differential"/>
</dbReference>
<dbReference type="GO" id="GO:0005886">
    <property type="term" value="C:plasma membrane"/>
    <property type="evidence" value="ECO:0000314"/>
    <property type="project" value="UniProtKB"/>
</dbReference>
<dbReference type="GO" id="GO:0006915">
    <property type="term" value="P:apoptotic process"/>
    <property type="evidence" value="ECO:0000314"/>
    <property type="project" value="UniProtKB"/>
</dbReference>
<dbReference type="GO" id="GO:0032060">
    <property type="term" value="P:bleb assembly"/>
    <property type="evidence" value="ECO:0000314"/>
    <property type="project" value="UniProtKB"/>
</dbReference>
<dbReference type="FunFam" id="1.20.140.150:FF:000016">
    <property type="entry name" value="Epithelial membrane protein 3"/>
    <property type="match status" value="1"/>
</dbReference>
<dbReference type="Gene3D" id="1.20.140.150">
    <property type="match status" value="1"/>
</dbReference>
<dbReference type="InterPro" id="IPR003934">
    <property type="entry name" value="EMP_3"/>
</dbReference>
<dbReference type="InterPro" id="IPR050579">
    <property type="entry name" value="PMP-22/EMP/MP20-like"/>
</dbReference>
<dbReference type="InterPro" id="IPR004031">
    <property type="entry name" value="PMP22/EMP/MP20/Claudin"/>
</dbReference>
<dbReference type="InterPro" id="IPR004032">
    <property type="entry name" value="PMP22_EMP_MP20"/>
</dbReference>
<dbReference type="PANTHER" id="PTHR10671:SF8">
    <property type="entry name" value="EPITHELIAL MEMBRANE PROTEIN 3"/>
    <property type="match status" value="1"/>
</dbReference>
<dbReference type="PANTHER" id="PTHR10671">
    <property type="entry name" value="EPITHELIAL MEMBRANE PROTEIN-RELATED"/>
    <property type="match status" value="1"/>
</dbReference>
<dbReference type="Pfam" id="PF00822">
    <property type="entry name" value="PMP22_Claudin"/>
    <property type="match status" value="1"/>
</dbReference>
<dbReference type="PRINTS" id="PR01453">
    <property type="entry name" value="EPMEMFAMILY"/>
</dbReference>
<dbReference type="PRINTS" id="PR01456">
    <property type="entry name" value="EPMEMPROT3"/>
</dbReference>
<dbReference type="PROSITE" id="PS01221">
    <property type="entry name" value="PMP22_1"/>
    <property type="match status" value="1"/>
</dbReference>
<dbReference type="PROSITE" id="PS01222">
    <property type="entry name" value="PMP22_2"/>
    <property type="match status" value="1"/>
</dbReference>
<reference key="1">
    <citation type="journal article" date="1996" name="Gene">
        <title>Characterization of a tumor-associated gene, a member of a novel family of genes encoding membrane glycoproteins.</title>
        <authorList>
            <person name="Ben-Porath I."/>
            <person name="Benvenisty N."/>
        </authorList>
    </citation>
    <scope>NUCLEOTIDE SEQUENCE [MRNA]</scope>
</reference>
<reference key="2">
    <citation type="journal article" date="1996" name="Gene">
        <title>Epithelial membrane protein-2 and epithelial membrane protein-3: two novel members of the peripheral myelin protein 22 gene family.</title>
        <authorList>
            <person name="Taylor V."/>
            <person name="Suter U."/>
        </authorList>
    </citation>
    <scope>NUCLEOTIDE SEQUENCE [MRNA]</scope>
    <source>
        <tissue>Spleen</tissue>
    </source>
</reference>
<reference key="3">
    <citation type="journal article" date="1997" name="J. Neurosci.">
        <title>HNMP-1: a novel hematopoietic and neural membrane protein differentially regulated in neural development and injury.</title>
        <authorList>
            <person name="Bolin L.M."/>
            <person name="McNeil T."/>
            <person name="Lucian L.A."/>
            <person name="Devaux B."/>
            <person name="Franz-Bacon K."/>
            <person name="Gorman D.M."/>
            <person name="Zurawski S."/>
            <person name="Murray R."/>
            <person name="McClanahan T.K."/>
        </authorList>
    </citation>
    <scope>NUCLEOTIDE SEQUENCE [MRNA]</scope>
</reference>
<reference key="4">
    <citation type="submission" date="2003-05" db="EMBL/GenBank/DDBJ databases">
        <title>Cloning of human full-length CDSs in BD Creator(TM) system donor vector.</title>
        <authorList>
            <person name="Kalnine N."/>
            <person name="Chen X."/>
            <person name="Rolfs A."/>
            <person name="Halleck A."/>
            <person name="Hines L."/>
            <person name="Eisenstein S."/>
            <person name="Koundinya M."/>
            <person name="Raphael J."/>
            <person name="Moreira D."/>
            <person name="Kelley T."/>
            <person name="LaBaer J."/>
            <person name="Lin Y."/>
            <person name="Phelan M."/>
            <person name="Farmer A."/>
        </authorList>
    </citation>
    <scope>NUCLEOTIDE SEQUENCE [LARGE SCALE MRNA]</scope>
</reference>
<reference key="5">
    <citation type="submission" date="2004-06" db="EMBL/GenBank/DDBJ databases">
        <title>Cloning of human full open reading frames in Gateway(TM) system entry vector (pDONR201).</title>
        <authorList>
            <person name="Ebert L."/>
            <person name="Schick M."/>
            <person name="Neubert P."/>
            <person name="Schatten R."/>
            <person name="Henze S."/>
            <person name="Korn B."/>
        </authorList>
    </citation>
    <scope>NUCLEOTIDE SEQUENCE [LARGE SCALE MRNA]</scope>
</reference>
<reference key="6">
    <citation type="submission" date="2005-07" db="EMBL/GenBank/DDBJ databases">
        <authorList>
            <person name="Mural R.J."/>
            <person name="Istrail S."/>
            <person name="Sutton G.G."/>
            <person name="Florea L."/>
            <person name="Halpern A.L."/>
            <person name="Mobarry C.M."/>
            <person name="Lippert R."/>
            <person name="Walenz B."/>
            <person name="Shatkay H."/>
            <person name="Dew I."/>
            <person name="Miller J.R."/>
            <person name="Flanigan M.J."/>
            <person name="Edwards N.J."/>
            <person name="Bolanos R."/>
            <person name="Fasulo D."/>
            <person name="Halldorsson B.V."/>
            <person name="Hannenhalli S."/>
            <person name="Turner R."/>
            <person name="Yooseph S."/>
            <person name="Lu F."/>
            <person name="Nusskern D.R."/>
            <person name="Shue B.C."/>
            <person name="Zheng X.H."/>
            <person name="Zhong F."/>
            <person name="Delcher A.L."/>
            <person name="Huson D.H."/>
            <person name="Kravitz S.A."/>
            <person name="Mouchard L."/>
            <person name="Reinert K."/>
            <person name="Remington K.A."/>
            <person name="Clark A.G."/>
            <person name="Waterman M.S."/>
            <person name="Eichler E.E."/>
            <person name="Adams M.D."/>
            <person name="Hunkapiller M.W."/>
            <person name="Myers E.W."/>
            <person name="Venter J.C."/>
        </authorList>
    </citation>
    <scope>NUCLEOTIDE SEQUENCE [LARGE SCALE GENOMIC DNA]</scope>
</reference>
<reference key="7">
    <citation type="journal article" date="2004" name="Genome Res.">
        <title>The status, quality, and expansion of the NIH full-length cDNA project: the Mammalian Gene Collection (MGC).</title>
        <authorList>
            <consortium name="The MGC Project Team"/>
        </authorList>
    </citation>
    <scope>NUCLEOTIDE SEQUENCE [LARGE SCALE MRNA]</scope>
    <source>
        <tissue>Lung</tissue>
    </source>
</reference>
<accession>P54852</accession>
<accession>Q6FH01</accession>
<keyword id="KW-0325">Glycoprotein</keyword>
<keyword id="KW-0472">Membrane</keyword>
<keyword id="KW-1267">Proteomics identification</keyword>
<keyword id="KW-1185">Reference proteome</keyword>
<keyword id="KW-0812">Transmembrane</keyword>
<keyword id="KW-1133">Transmembrane helix</keyword>
<sequence>MSLLLLVVSALHILILILLFVATLDKSWWTLPGKESLNLWYDCTWNNDTKTWACSNVSENGWLKAVQVLMVLSLILCCLSFILFMFQLYTMRRGGLFYATGLCQLCTSVAVFTGALIYAIHAEEILEKHPRGGSFGYCFALAWVAFPLALVSGIIYIHLRKRE</sequence>
<organism>
    <name type="scientific">Homo sapiens</name>
    <name type="common">Human</name>
    <dbReference type="NCBI Taxonomy" id="9606"/>
    <lineage>
        <taxon>Eukaryota</taxon>
        <taxon>Metazoa</taxon>
        <taxon>Chordata</taxon>
        <taxon>Craniata</taxon>
        <taxon>Vertebrata</taxon>
        <taxon>Euteleostomi</taxon>
        <taxon>Mammalia</taxon>
        <taxon>Eutheria</taxon>
        <taxon>Euarchontoglires</taxon>
        <taxon>Primates</taxon>
        <taxon>Haplorrhini</taxon>
        <taxon>Catarrhini</taxon>
        <taxon>Hominidae</taxon>
        <taxon>Homo</taxon>
    </lineage>
</organism>
<comment type="function">
    <text>Probably involved in cell proliferation and cell-cell interactions.</text>
</comment>
<comment type="interaction">
    <interactant intactId="EBI-3907816">
        <id>P54852</id>
    </interactant>
    <interactant intactId="EBI-13059134">
        <id>Q13520</id>
        <label>AQP6</label>
    </interactant>
    <organismsDiffer>false</organismsDiffer>
    <experiments>3</experiments>
</comment>
<comment type="interaction">
    <interactant intactId="EBI-3907816">
        <id>P54852</id>
    </interactant>
    <interactant intactId="EBI-721848">
        <id>Q9NW68</id>
        <label>BSDC1</label>
    </interactant>
    <organismsDiffer>false</organismsDiffer>
    <experiments>3</experiments>
</comment>
<comment type="interaction">
    <interactant intactId="EBI-3907816">
        <id>P54852</id>
    </interactant>
    <interactant intactId="EBI-7797864">
        <id>P11912</id>
        <label>CD79A</label>
    </interactant>
    <organismsDiffer>false</organismsDiffer>
    <experiments>3</experiments>
</comment>
<comment type="interaction">
    <interactant intactId="EBI-3907816">
        <id>P54852</id>
    </interactant>
    <interactant intactId="EBI-751440">
        <id>P57739</id>
        <label>CLDN2</label>
    </interactant>
    <organismsDiffer>false</organismsDiffer>
    <experiments>3</experiments>
</comment>
<comment type="interaction">
    <interactant intactId="EBI-3907816">
        <id>P54852</id>
    </interactant>
    <interactant intactId="EBI-740744">
        <id>O95471</id>
        <label>CLDN7</label>
    </interactant>
    <organismsDiffer>false</organismsDiffer>
    <experiments>3</experiments>
</comment>
<comment type="interaction">
    <interactant intactId="EBI-3907816">
        <id>P54852</id>
    </interactant>
    <interactant intactId="EBI-2548702">
        <id>Q96DZ9</id>
        <label>CMTM5</label>
    </interactant>
    <organismsDiffer>false</organismsDiffer>
    <experiments>3</experiments>
</comment>
<comment type="interaction">
    <interactant intactId="EBI-3907816">
        <id>P54852</id>
    </interactant>
    <interactant intactId="EBI-6942903">
        <id>Q96BA8</id>
        <label>CREB3L1</label>
    </interactant>
    <organismsDiffer>false</organismsDiffer>
    <experiments>3</experiments>
</comment>
<comment type="interaction">
    <interactant intactId="EBI-3907816">
        <id>P54852</id>
    </interactant>
    <interactant intactId="EBI-529425">
        <id>Q92838</id>
        <label>EDA</label>
    </interactant>
    <organismsDiffer>false</organismsDiffer>
    <experiments>7</experiments>
</comment>
<comment type="interaction">
    <interactant intactId="EBI-3907816">
        <id>P54852</id>
    </interactant>
    <interactant intactId="EBI-10285373">
        <id>A1L3X0</id>
        <label>ELOVL7</label>
    </interactant>
    <organismsDiffer>false</organismsDiffer>
    <experiments>3</experiments>
</comment>
<comment type="interaction">
    <interactant intactId="EBI-3907816">
        <id>P54852</id>
    </interactant>
    <interactant intactId="EBI-781551">
        <id>Q9Y282</id>
        <label>ERGIC3</label>
    </interactant>
    <organismsDiffer>false</organismsDiffer>
    <experiments>3</experiments>
</comment>
<comment type="interaction">
    <interactant intactId="EBI-3907816">
        <id>P54852</id>
    </interactant>
    <interactant intactId="EBI-18938272">
        <id>Q96KR6</id>
        <label>FAM210B</label>
    </interactant>
    <organismsDiffer>false</organismsDiffer>
    <experiments>3</experiments>
</comment>
<comment type="interaction">
    <interactant intactId="EBI-3907816">
        <id>P54852</id>
    </interactant>
    <interactant intactId="EBI-603643">
        <id>O75955</id>
        <label>FLOT1</label>
    </interactant>
    <organismsDiffer>false</organismsDiffer>
    <experiments>3</experiments>
</comment>
<comment type="interaction">
    <interactant intactId="EBI-3907816">
        <id>P54852</id>
    </interactant>
    <interactant intactId="EBI-12142257">
        <id>Q8TBE3</id>
        <label>FNDC9</label>
    </interactant>
    <organismsDiffer>false</organismsDiffer>
    <experiments>3</experiments>
</comment>
<comment type="interaction">
    <interactant intactId="EBI-3907816">
        <id>P54852</id>
    </interactant>
    <interactant intactId="EBI-750433">
        <id>P36382</id>
        <label>GJA5</label>
    </interactant>
    <organismsDiffer>false</organismsDiffer>
    <experiments>3</experiments>
</comment>
<comment type="interaction">
    <interactant intactId="EBI-3907816">
        <id>P54852</id>
    </interactant>
    <interactant intactId="EBI-17565645">
        <id>P08034</id>
        <label>GJB1</label>
    </interactant>
    <organismsDiffer>false</organismsDiffer>
    <experiments>3</experiments>
</comment>
<comment type="interaction">
    <interactant intactId="EBI-3907816">
        <id>P54852</id>
    </interactant>
    <interactant intactId="EBI-4289554">
        <id>Q99795</id>
        <label>GPA33</label>
    </interactant>
    <organismsDiffer>false</organismsDiffer>
    <experiments>3</experiments>
</comment>
<comment type="interaction">
    <interactant intactId="EBI-3907816">
        <id>P54852</id>
    </interactant>
    <interactant intactId="EBI-12808020">
        <id>Q9BZJ8</id>
        <label>GPR61</label>
    </interactant>
    <organismsDiffer>false</organismsDiffer>
    <experiments>3</experiments>
</comment>
<comment type="interaction">
    <interactant intactId="EBI-3907816">
        <id>P54852</id>
    </interactant>
    <interactant intactId="EBI-13625358">
        <id>Q9BUP3</id>
        <label>HTATIP2</label>
    </interactant>
    <organismsDiffer>false</organismsDiffer>
    <experiments>3</experiments>
</comment>
<comment type="interaction">
    <interactant intactId="EBI-3907816">
        <id>P54852</id>
    </interactant>
    <interactant intactId="EBI-3905457">
        <id>P38484</id>
        <label>IFNGR2</label>
    </interactant>
    <organismsDiffer>false</organismsDiffer>
    <experiments>3</experiments>
</comment>
<comment type="interaction">
    <interactant intactId="EBI-3907816">
        <id>P54852</id>
    </interactant>
    <interactant intactId="EBI-1757512">
        <id>P26951</id>
        <label>IL3RA</label>
    </interactant>
    <organismsDiffer>false</organismsDiffer>
    <experiments>3</experiments>
</comment>
<comment type="interaction">
    <interactant intactId="EBI-3907816">
        <id>P54852</id>
    </interactant>
    <interactant intactId="EBI-17272405">
        <id>Q8N743</id>
        <label>KIR3DL3</label>
    </interactant>
    <organismsDiffer>false</organismsDiffer>
    <experiments>3</experiments>
</comment>
<comment type="interaction">
    <interactant intactId="EBI-3907816">
        <id>P54852</id>
    </interactant>
    <interactant intactId="EBI-9018187">
        <id>P26715</id>
        <label>KLRC1</label>
    </interactant>
    <organismsDiffer>false</organismsDiffer>
    <experiments>4</experiments>
</comment>
<comment type="interaction">
    <interactant intactId="EBI-3907816">
        <id>P54852</id>
    </interactant>
    <interactant intactId="EBI-10173166">
        <id>Q5T700</id>
        <label>LDLRAD1</label>
    </interactant>
    <organismsDiffer>false</organismsDiffer>
    <experiments>3</experiments>
</comment>
<comment type="interaction">
    <interactant intactId="EBI-3907816">
        <id>P54852</id>
    </interactant>
    <interactant intactId="EBI-17490413">
        <id>A8MZ59</id>
        <label>LEUTX</label>
    </interactant>
    <organismsDiffer>false</organismsDiffer>
    <experiments>3</experiments>
</comment>
<comment type="interaction">
    <interactant intactId="EBI-3907816">
        <id>P54852</id>
    </interactant>
    <interactant intactId="EBI-2820517">
        <id>Q8TAF8</id>
        <label>LHFPL5</label>
    </interactant>
    <organismsDiffer>false</organismsDiffer>
    <experiments>3</experiments>
</comment>
<comment type="interaction">
    <interactant intactId="EBI-3907816">
        <id>P54852</id>
    </interactant>
    <interactant intactId="EBI-3925442">
        <id>Q9HCJ2</id>
        <label>LRRC4C</label>
    </interactant>
    <organismsDiffer>false</organismsDiffer>
    <experiments>3</experiments>
</comment>
<comment type="interaction">
    <interactant intactId="EBI-3907816">
        <id>P54852</id>
    </interactant>
    <interactant intactId="EBI-10329546">
        <id>Q9Y5Y7</id>
        <label>LYVE1</label>
    </interactant>
    <organismsDiffer>false</organismsDiffer>
    <experiments>3</experiments>
</comment>
<comment type="interaction">
    <interactant intactId="EBI-3907816">
        <id>P54852</id>
    </interactant>
    <interactant intactId="EBI-12201447">
        <id>Q95460-2</id>
        <label>MR1</label>
    </interactant>
    <organismsDiffer>false</organismsDiffer>
    <experiments>3</experiments>
</comment>
<comment type="interaction">
    <interactant intactId="EBI-3907816">
        <id>P54852</id>
    </interactant>
    <interactant intactId="EBI-12806656">
        <id>Q96HJ5</id>
        <label>MS4A3</label>
    </interactant>
    <organismsDiffer>false</organismsDiffer>
    <experiments>3</experiments>
</comment>
<comment type="interaction">
    <interactant intactId="EBI-3907816">
        <id>P54852</id>
    </interactant>
    <interactant intactId="EBI-17263240">
        <id>P15941-11</id>
        <label>MUC1</label>
    </interactant>
    <organismsDiffer>false</organismsDiffer>
    <experiments>3</experiments>
</comment>
<comment type="interaction">
    <interactant intactId="EBI-3907816">
        <id>P54852</id>
    </interactant>
    <interactant intactId="EBI-12807478">
        <id>P35372-10</id>
        <label>OPRM1</label>
    </interactant>
    <organismsDiffer>false</organismsDiffer>
    <experiments>3</experiments>
</comment>
<comment type="interaction">
    <interactant intactId="EBI-3907816">
        <id>P54852</id>
    </interactant>
    <interactant intactId="EBI-373552">
        <id>Q96CS7</id>
        <label>PLEKHB2</label>
    </interactant>
    <organismsDiffer>false</organismsDiffer>
    <experiments>3</experiments>
</comment>
<comment type="interaction">
    <interactant intactId="EBI-3907816">
        <id>P54852</id>
    </interactant>
    <interactant intactId="EBI-608347">
        <id>Q04941</id>
        <label>PLP2</label>
    </interactant>
    <organismsDiffer>false</organismsDiffer>
    <experiments>3</experiments>
</comment>
<comment type="interaction">
    <interactant intactId="EBI-3907816">
        <id>P54852</id>
    </interactant>
    <interactant intactId="EBI-602366">
        <id>P10114</id>
        <label>RAP2A</label>
    </interactant>
    <organismsDiffer>false</organismsDiffer>
    <experiments>3</experiments>
</comment>
<comment type="interaction">
    <interactant intactId="EBI-3907816">
        <id>P54852</id>
    </interactant>
    <interactant intactId="EBI-1056589">
        <id>Q96TC7</id>
        <label>RMDN3</label>
    </interactant>
    <organismsDiffer>false</organismsDiffer>
    <experiments>3</experiments>
</comment>
<comment type="interaction">
    <interactant intactId="EBI-3907816">
        <id>P54852</id>
    </interactant>
    <interactant intactId="EBI-3920694">
        <id>Q9NR31</id>
        <label>SAR1A</label>
    </interactant>
    <organismsDiffer>false</organismsDiffer>
    <experiments>3</experiments>
</comment>
<comment type="interaction">
    <interactant intactId="EBI-3907816">
        <id>P54852</id>
    </interactant>
    <interactant intactId="EBI-2855289">
        <id>Q8WVN6</id>
        <label>SECTM1</label>
    </interactant>
    <organismsDiffer>false</organismsDiffer>
    <experiments>3</experiments>
</comment>
<comment type="interaction">
    <interactant intactId="EBI-3907816">
        <id>P54852</id>
    </interactant>
    <interactant intactId="EBI-18052611">
        <id>Q8N7X8</id>
        <label>SIGLECL1</label>
    </interactant>
    <organismsDiffer>false</organismsDiffer>
    <experiments>3</experiments>
</comment>
<comment type="interaction">
    <interactant intactId="EBI-3907816">
        <id>P54852</id>
    </interactant>
    <interactant intactId="EBI-18164173">
        <id>Q9P0V8</id>
        <label>SLAMF8</label>
    </interactant>
    <organismsDiffer>false</organismsDiffer>
    <experiments>3</experiments>
</comment>
<comment type="interaction">
    <interactant intactId="EBI-3907816">
        <id>P54852</id>
    </interactant>
    <interactant intactId="EBI-8644112">
        <id>Q9BRI3</id>
        <label>SLC30A2</label>
    </interactant>
    <organismsDiffer>false</organismsDiffer>
    <experiments>3</experiments>
</comment>
<comment type="interaction">
    <interactant intactId="EBI-3907816">
        <id>P54852</id>
    </interactant>
    <interactant intactId="EBI-17295964">
        <id>Q9NQQ7-3</id>
        <label>SLC35C2</label>
    </interactant>
    <organismsDiffer>false</organismsDiffer>
    <experiments>3</experiments>
</comment>
<comment type="interaction">
    <interactant intactId="EBI-3907816">
        <id>P54852</id>
    </interactant>
    <interactant intactId="EBI-741850">
        <id>Q9BZL3</id>
        <label>SMIM3</label>
    </interactant>
    <organismsDiffer>false</organismsDiffer>
    <experiments>3</experiments>
</comment>
<comment type="interaction">
    <interactant intactId="EBI-3907816">
        <id>P54852</id>
    </interactant>
    <interactant intactId="EBI-17498703">
        <id>Q9HBV2</id>
        <label>SPACA1</label>
    </interactant>
    <organismsDiffer>false</organismsDiffer>
    <experiments>3</experiments>
</comment>
<comment type="interaction">
    <interactant intactId="EBI-3907816">
        <id>P54852</id>
    </interactant>
    <interactant intactId="EBI-13351685">
        <id>Q96CE8</id>
        <label>TM4SF18</label>
    </interactant>
    <organismsDiffer>false</organismsDiffer>
    <experiments>3</experiments>
</comment>
<comment type="interaction">
    <interactant intactId="EBI-3907816">
        <id>P54852</id>
    </interactant>
    <interactant intactId="EBI-726044">
        <id>Q9NW97</id>
        <label>TMEM51</label>
    </interactant>
    <organismsDiffer>false</organismsDiffer>
    <experiments>3</experiments>
</comment>
<comment type="interaction">
    <interactant intactId="EBI-3907816">
        <id>P54852</id>
    </interactant>
    <interactant intactId="EBI-6447886">
        <id>Q9Y320</id>
        <label>TMX2</label>
    </interactant>
    <organismsDiffer>false</organismsDiffer>
    <experiments>3</experiments>
</comment>
<comment type="interaction">
    <interactant intactId="EBI-3907816">
        <id>P54852</id>
    </interactant>
    <interactant intactId="EBI-2466403">
        <id>O95859</id>
        <label>TSPAN12</label>
    </interactant>
    <organismsDiffer>false</organismsDiffer>
    <experiments>3</experiments>
</comment>
<comment type="interaction">
    <interactant intactId="EBI-3907816">
        <id>P54852</id>
    </interactant>
    <interactant intactId="EBI-722343">
        <id>Q15836</id>
        <label>VAMP3</label>
    </interactant>
    <organismsDiffer>false</organismsDiffer>
    <experiments>3</experiments>
</comment>
<comment type="interaction">
    <interactant intactId="EBI-3907816">
        <id>P54852</id>
    </interactant>
    <interactant intactId="EBI-18323486">
        <id>Q86XK7</id>
        <label>VSIG1</label>
    </interactant>
    <organismsDiffer>false</organismsDiffer>
    <experiments>3</experiments>
</comment>
<comment type="subcellular location">
    <subcellularLocation>
        <location>Membrane</location>
        <topology>Multi-pass membrane protein</topology>
    </subcellularLocation>
</comment>
<comment type="similarity">
    <text evidence="2">Belongs to the PMP-22/EMP/MP20 family.</text>
</comment>